<protein>
    <recommendedName>
        <fullName evidence="1">Histidinol dehydrogenase</fullName>
        <shortName evidence="1">HDH</shortName>
        <ecNumber evidence="1">1.1.1.23</ecNumber>
    </recommendedName>
</protein>
<dbReference type="EC" id="1.1.1.23" evidence="1"/>
<dbReference type="EMBL" id="AE014299">
    <property type="protein sequence ID" value="AAN55120.1"/>
    <property type="molecule type" value="Genomic_DNA"/>
</dbReference>
<dbReference type="RefSeq" id="NP_717676.1">
    <property type="nucleotide sequence ID" value="NC_004347.2"/>
</dbReference>
<dbReference type="RefSeq" id="WP_011072140.1">
    <property type="nucleotide sequence ID" value="NC_004347.2"/>
</dbReference>
<dbReference type="SMR" id="Q8EFB1"/>
<dbReference type="STRING" id="211586.SO_2073"/>
<dbReference type="PaxDb" id="211586-SO_2073"/>
<dbReference type="KEGG" id="son:SO_2073"/>
<dbReference type="PATRIC" id="fig|211586.12.peg.1991"/>
<dbReference type="eggNOG" id="COG0141">
    <property type="taxonomic scope" value="Bacteria"/>
</dbReference>
<dbReference type="HOGENOM" id="CLU_006732_3_0_6"/>
<dbReference type="OrthoDB" id="9805269at2"/>
<dbReference type="PhylomeDB" id="Q8EFB1"/>
<dbReference type="BioCyc" id="SONE211586:G1GMP-1906-MONOMER"/>
<dbReference type="UniPathway" id="UPA00031">
    <property type="reaction ID" value="UER00014"/>
</dbReference>
<dbReference type="Proteomes" id="UP000008186">
    <property type="component" value="Chromosome"/>
</dbReference>
<dbReference type="GO" id="GO:0005737">
    <property type="term" value="C:cytoplasm"/>
    <property type="evidence" value="ECO:0000318"/>
    <property type="project" value="GO_Central"/>
</dbReference>
<dbReference type="GO" id="GO:0005829">
    <property type="term" value="C:cytosol"/>
    <property type="evidence" value="ECO:0000318"/>
    <property type="project" value="GO_Central"/>
</dbReference>
<dbReference type="GO" id="GO:0004399">
    <property type="term" value="F:histidinol dehydrogenase activity"/>
    <property type="evidence" value="ECO:0000318"/>
    <property type="project" value="GO_Central"/>
</dbReference>
<dbReference type="GO" id="GO:0051287">
    <property type="term" value="F:NAD binding"/>
    <property type="evidence" value="ECO:0007669"/>
    <property type="project" value="InterPro"/>
</dbReference>
<dbReference type="GO" id="GO:0008270">
    <property type="term" value="F:zinc ion binding"/>
    <property type="evidence" value="ECO:0007669"/>
    <property type="project" value="UniProtKB-UniRule"/>
</dbReference>
<dbReference type="GO" id="GO:0000105">
    <property type="term" value="P:L-histidine biosynthetic process"/>
    <property type="evidence" value="ECO:0000318"/>
    <property type="project" value="GO_Central"/>
</dbReference>
<dbReference type="CDD" id="cd06572">
    <property type="entry name" value="Histidinol_dh"/>
    <property type="match status" value="1"/>
</dbReference>
<dbReference type="FunFam" id="1.20.5.1300:FF:000001">
    <property type="entry name" value="Histidine biosynthesis trifunctional protein"/>
    <property type="match status" value="1"/>
</dbReference>
<dbReference type="FunFam" id="3.40.50.1980:FF:000001">
    <property type="entry name" value="Histidinol dehydrogenase"/>
    <property type="match status" value="1"/>
</dbReference>
<dbReference type="Gene3D" id="1.20.5.1300">
    <property type="match status" value="1"/>
</dbReference>
<dbReference type="Gene3D" id="3.40.50.1980">
    <property type="entry name" value="Nitrogenase molybdenum iron protein domain"/>
    <property type="match status" value="2"/>
</dbReference>
<dbReference type="HAMAP" id="MF_01024">
    <property type="entry name" value="HisD"/>
    <property type="match status" value="1"/>
</dbReference>
<dbReference type="InterPro" id="IPR016161">
    <property type="entry name" value="Ald_DH/histidinol_DH"/>
</dbReference>
<dbReference type="InterPro" id="IPR001692">
    <property type="entry name" value="Histidinol_DH_CS"/>
</dbReference>
<dbReference type="InterPro" id="IPR022695">
    <property type="entry name" value="Histidinol_DH_monofunct"/>
</dbReference>
<dbReference type="InterPro" id="IPR012131">
    <property type="entry name" value="Hstdl_DH"/>
</dbReference>
<dbReference type="NCBIfam" id="TIGR00069">
    <property type="entry name" value="hisD"/>
    <property type="match status" value="1"/>
</dbReference>
<dbReference type="PANTHER" id="PTHR21256:SF2">
    <property type="entry name" value="HISTIDINE BIOSYNTHESIS TRIFUNCTIONAL PROTEIN"/>
    <property type="match status" value="1"/>
</dbReference>
<dbReference type="PANTHER" id="PTHR21256">
    <property type="entry name" value="HISTIDINOL DEHYDROGENASE HDH"/>
    <property type="match status" value="1"/>
</dbReference>
<dbReference type="Pfam" id="PF00815">
    <property type="entry name" value="Histidinol_dh"/>
    <property type="match status" value="1"/>
</dbReference>
<dbReference type="PIRSF" id="PIRSF000099">
    <property type="entry name" value="Histidinol_dh"/>
    <property type="match status" value="1"/>
</dbReference>
<dbReference type="PRINTS" id="PR00083">
    <property type="entry name" value="HOLDHDRGNASE"/>
</dbReference>
<dbReference type="SUPFAM" id="SSF53720">
    <property type="entry name" value="ALDH-like"/>
    <property type="match status" value="1"/>
</dbReference>
<dbReference type="PROSITE" id="PS00611">
    <property type="entry name" value="HISOL_DEHYDROGENASE"/>
    <property type="match status" value="1"/>
</dbReference>
<feature type="chain" id="PRO_0000135841" description="Histidinol dehydrogenase">
    <location>
        <begin position="1"/>
        <end position="438"/>
    </location>
</feature>
<feature type="active site" description="Proton acceptor" evidence="1">
    <location>
        <position position="332"/>
    </location>
</feature>
<feature type="active site" description="Proton acceptor" evidence="1">
    <location>
        <position position="333"/>
    </location>
</feature>
<feature type="binding site" evidence="1">
    <location>
        <position position="135"/>
    </location>
    <ligand>
        <name>NAD(+)</name>
        <dbReference type="ChEBI" id="CHEBI:57540"/>
    </ligand>
</feature>
<feature type="binding site" evidence="1">
    <location>
        <position position="193"/>
    </location>
    <ligand>
        <name>NAD(+)</name>
        <dbReference type="ChEBI" id="CHEBI:57540"/>
    </ligand>
</feature>
<feature type="binding site" evidence="1">
    <location>
        <position position="216"/>
    </location>
    <ligand>
        <name>NAD(+)</name>
        <dbReference type="ChEBI" id="CHEBI:57540"/>
    </ligand>
</feature>
<feature type="binding site" evidence="1">
    <location>
        <position position="243"/>
    </location>
    <ligand>
        <name>substrate</name>
    </ligand>
</feature>
<feature type="binding site" evidence="1">
    <location>
        <position position="265"/>
    </location>
    <ligand>
        <name>substrate</name>
    </ligand>
</feature>
<feature type="binding site" evidence="1">
    <location>
        <position position="265"/>
    </location>
    <ligand>
        <name>Zn(2+)</name>
        <dbReference type="ChEBI" id="CHEBI:29105"/>
    </ligand>
</feature>
<feature type="binding site" evidence="1">
    <location>
        <position position="268"/>
    </location>
    <ligand>
        <name>substrate</name>
    </ligand>
</feature>
<feature type="binding site" evidence="1">
    <location>
        <position position="268"/>
    </location>
    <ligand>
        <name>Zn(2+)</name>
        <dbReference type="ChEBI" id="CHEBI:29105"/>
    </ligand>
</feature>
<feature type="binding site" evidence="1">
    <location>
        <position position="333"/>
    </location>
    <ligand>
        <name>substrate</name>
    </ligand>
</feature>
<feature type="binding site" evidence="1">
    <location>
        <position position="366"/>
    </location>
    <ligand>
        <name>substrate</name>
    </ligand>
</feature>
<feature type="binding site" evidence="1">
    <location>
        <position position="366"/>
    </location>
    <ligand>
        <name>Zn(2+)</name>
        <dbReference type="ChEBI" id="CHEBI:29105"/>
    </ligand>
</feature>
<feature type="binding site" evidence="1">
    <location>
        <position position="420"/>
    </location>
    <ligand>
        <name>substrate</name>
    </ligand>
</feature>
<feature type="binding site" evidence="1">
    <location>
        <position position="425"/>
    </location>
    <ligand>
        <name>substrate</name>
    </ligand>
</feature>
<feature type="binding site" evidence="1">
    <location>
        <position position="425"/>
    </location>
    <ligand>
        <name>Zn(2+)</name>
        <dbReference type="ChEBI" id="CHEBI:29105"/>
    </ligand>
</feature>
<reference key="1">
    <citation type="journal article" date="2002" name="Nat. Biotechnol.">
        <title>Genome sequence of the dissimilatory metal ion-reducing bacterium Shewanella oneidensis.</title>
        <authorList>
            <person name="Heidelberg J.F."/>
            <person name="Paulsen I.T."/>
            <person name="Nelson K.E."/>
            <person name="Gaidos E.J."/>
            <person name="Nelson W.C."/>
            <person name="Read T.D."/>
            <person name="Eisen J.A."/>
            <person name="Seshadri R."/>
            <person name="Ward N.L."/>
            <person name="Methe B.A."/>
            <person name="Clayton R.A."/>
            <person name="Meyer T."/>
            <person name="Tsapin A."/>
            <person name="Scott J."/>
            <person name="Beanan M.J."/>
            <person name="Brinkac L.M."/>
            <person name="Daugherty S.C."/>
            <person name="DeBoy R.T."/>
            <person name="Dodson R.J."/>
            <person name="Durkin A.S."/>
            <person name="Haft D.H."/>
            <person name="Kolonay J.F."/>
            <person name="Madupu R."/>
            <person name="Peterson J.D."/>
            <person name="Umayam L.A."/>
            <person name="White O."/>
            <person name="Wolf A.M."/>
            <person name="Vamathevan J.J."/>
            <person name="Weidman J.F."/>
            <person name="Impraim M."/>
            <person name="Lee K."/>
            <person name="Berry K.J."/>
            <person name="Lee C."/>
            <person name="Mueller J."/>
            <person name="Khouri H.M."/>
            <person name="Gill J."/>
            <person name="Utterback T.R."/>
            <person name="McDonald L.A."/>
            <person name="Feldblyum T.V."/>
            <person name="Smith H.O."/>
            <person name="Venter J.C."/>
            <person name="Nealson K.H."/>
            <person name="Fraser C.M."/>
        </authorList>
    </citation>
    <scope>NUCLEOTIDE SEQUENCE [LARGE SCALE GENOMIC DNA]</scope>
    <source>
        <strain>ATCC 700550 / JCM 31522 / CIP 106686 / LMG 19005 / NCIMB 14063 / MR-1</strain>
    </source>
</reference>
<sequence>MDMLTWAALSADEQKTALQRSPLIGDSGLEQSVRAIVDAVASRGDAAIKEFNQKFDGARLANISSANSDNLRLSEHEIEAASARVSPELKAAIAQAMANIDVFHSAQQFRPIDIETQAGVRCELRSEPIEKVGLYIPGGSAPLISTVLMLALPATIAGCEQRVLVSPPPINDAIVYAANVCGITEIYQVGGAQAIAALAFGTETIPSVDKIFGPGNRYVTEAKRLVSQDGRCTVSIDMPAGPSEVLVIADSDANAQFIAADLLSQAEHGPDSQVILVTDSLPLAQAVNQALKSQLAALPRQEIAATALKGSRTILVKDMQEAALVSNRYGPEHLIIQTRFPREVLNNIRAAGSVFLGAYTPESVGDYASGTNHVLPTYGYSRAVSSLSLADFSRRFTVQELSAKGLLGLGQAVMTLASNELLDAHKNAVAVRLASLKG</sequence>
<name>HISX_SHEON</name>
<keyword id="KW-0028">Amino-acid biosynthesis</keyword>
<keyword id="KW-0368">Histidine biosynthesis</keyword>
<keyword id="KW-0479">Metal-binding</keyword>
<keyword id="KW-0520">NAD</keyword>
<keyword id="KW-0560">Oxidoreductase</keyword>
<keyword id="KW-1185">Reference proteome</keyword>
<keyword id="KW-0862">Zinc</keyword>
<accession>Q8EFB1</accession>
<comment type="function">
    <text evidence="1">Catalyzes the sequential NAD-dependent oxidations of L-histidinol to L-histidinaldehyde and then to L-histidine.</text>
</comment>
<comment type="catalytic activity">
    <reaction evidence="1">
        <text>L-histidinol + 2 NAD(+) + H2O = L-histidine + 2 NADH + 3 H(+)</text>
        <dbReference type="Rhea" id="RHEA:20641"/>
        <dbReference type="ChEBI" id="CHEBI:15377"/>
        <dbReference type="ChEBI" id="CHEBI:15378"/>
        <dbReference type="ChEBI" id="CHEBI:57540"/>
        <dbReference type="ChEBI" id="CHEBI:57595"/>
        <dbReference type="ChEBI" id="CHEBI:57699"/>
        <dbReference type="ChEBI" id="CHEBI:57945"/>
        <dbReference type="EC" id="1.1.1.23"/>
    </reaction>
</comment>
<comment type="cofactor">
    <cofactor evidence="1">
        <name>Zn(2+)</name>
        <dbReference type="ChEBI" id="CHEBI:29105"/>
    </cofactor>
    <text evidence="1">Binds 1 zinc ion per subunit.</text>
</comment>
<comment type="pathway">
    <text evidence="1">Amino-acid biosynthesis; L-histidine biosynthesis; L-histidine from 5-phospho-alpha-D-ribose 1-diphosphate: step 9/9.</text>
</comment>
<comment type="similarity">
    <text evidence="1">Belongs to the histidinol dehydrogenase family.</text>
</comment>
<gene>
    <name evidence="1" type="primary">hisD</name>
    <name type="ordered locus">SO_2073</name>
</gene>
<proteinExistence type="inferred from homology"/>
<evidence type="ECO:0000255" key="1">
    <source>
        <dbReference type="HAMAP-Rule" id="MF_01024"/>
    </source>
</evidence>
<organism>
    <name type="scientific">Shewanella oneidensis (strain ATCC 700550 / JCM 31522 / CIP 106686 / LMG 19005 / NCIMB 14063 / MR-1)</name>
    <dbReference type="NCBI Taxonomy" id="211586"/>
    <lineage>
        <taxon>Bacteria</taxon>
        <taxon>Pseudomonadati</taxon>
        <taxon>Pseudomonadota</taxon>
        <taxon>Gammaproteobacteria</taxon>
        <taxon>Alteromonadales</taxon>
        <taxon>Shewanellaceae</taxon>
        <taxon>Shewanella</taxon>
    </lineage>
</organism>